<reference key="1">
    <citation type="journal article" date="2004" name="Genome Res.">
        <title>The status, quality, and expansion of the NIH full-length cDNA project: the Mammalian Gene Collection (MGC).</title>
        <authorList>
            <consortium name="The MGC Project Team"/>
        </authorList>
    </citation>
    <scope>NUCLEOTIDE SEQUENCE [LARGE SCALE MRNA]</scope>
    <source>
        <tissue>Placenta</tissue>
    </source>
</reference>
<dbReference type="EMBL" id="BC099490">
    <property type="protein sequence ID" value="AAH99490.1"/>
    <property type="molecule type" value="mRNA"/>
</dbReference>
<dbReference type="CCDS" id="CCDS26716.1"/>
<dbReference type="RefSeq" id="NP_001020777.1">
    <property type="nucleotide sequence ID" value="NM_001025606.1"/>
</dbReference>
<dbReference type="FunCoup" id="Q4KL18">
    <property type="interactions" value="2"/>
</dbReference>
<dbReference type="STRING" id="10090.ENSMUSP00000070369"/>
<dbReference type="PhosphoSitePlus" id="Q4KL18"/>
<dbReference type="PaxDb" id="10090-ENSMUSP00000070369"/>
<dbReference type="ProteomicsDB" id="260683"/>
<dbReference type="Antibodypedia" id="24256">
    <property type="antibodies" value="19 antibodies from 11 providers"/>
</dbReference>
<dbReference type="Ensembl" id="ENSMUST00000064347.8">
    <property type="protein sequence ID" value="ENSMUSP00000070369.8"/>
    <property type="gene ID" value="ENSMUSG00000052485.8"/>
</dbReference>
<dbReference type="GeneID" id="380863"/>
<dbReference type="KEGG" id="mmu:380863"/>
<dbReference type="UCSC" id="uc007roy.1">
    <property type="organism name" value="mouse"/>
</dbReference>
<dbReference type="AGR" id="MGI:2685751"/>
<dbReference type="CTD" id="134285"/>
<dbReference type="MGI" id="MGI:2685751">
    <property type="gene designation" value="Tmem171"/>
</dbReference>
<dbReference type="VEuPathDB" id="HostDB:ENSMUSG00000052485"/>
<dbReference type="eggNOG" id="ENOG502QRR0">
    <property type="taxonomic scope" value="Eukaryota"/>
</dbReference>
<dbReference type="GeneTree" id="ENSGT00390000017024"/>
<dbReference type="HOGENOM" id="CLU_900031_0_0_1"/>
<dbReference type="InParanoid" id="Q4KL18"/>
<dbReference type="OMA" id="WHTIQLN"/>
<dbReference type="OrthoDB" id="9940935at2759"/>
<dbReference type="PhylomeDB" id="Q4KL18"/>
<dbReference type="TreeFam" id="TF335590"/>
<dbReference type="BioGRID-ORCS" id="380863">
    <property type="hits" value="0 hits in 79 CRISPR screens"/>
</dbReference>
<dbReference type="PRO" id="PR:Q4KL18"/>
<dbReference type="Proteomes" id="UP000000589">
    <property type="component" value="Chromosome 13"/>
</dbReference>
<dbReference type="RNAct" id="Q4KL18">
    <property type="molecule type" value="protein"/>
</dbReference>
<dbReference type="Bgee" id="ENSMUSG00000052485">
    <property type="expression patterns" value="Expressed in interventricular septum and 50 other cell types or tissues"/>
</dbReference>
<dbReference type="ExpressionAtlas" id="Q4KL18">
    <property type="expression patterns" value="baseline and differential"/>
</dbReference>
<dbReference type="GO" id="GO:0016020">
    <property type="term" value="C:membrane"/>
    <property type="evidence" value="ECO:0007669"/>
    <property type="project" value="UniProtKB-SubCell"/>
</dbReference>
<dbReference type="InterPro" id="IPR029173">
    <property type="entry name" value="TMEM171"/>
</dbReference>
<dbReference type="PANTHER" id="PTHR31617">
    <property type="entry name" value="TRANSMEMBRANE PROTEIN 171"/>
    <property type="match status" value="1"/>
</dbReference>
<dbReference type="PANTHER" id="PTHR31617:SF0">
    <property type="entry name" value="TRANSMEMBRANE PROTEIN 171"/>
    <property type="match status" value="1"/>
</dbReference>
<dbReference type="Pfam" id="PF15471">
    <property type="entry name" value="TMEM171"/>
    <property type="match status" value="1"/>
</dbReference>
<name>TM171_MOUSE</name>
<protein>
    <recommendedName>
        <fullName>Transmembrane protein 171</fullName>
    </recommendedName>
</protein>
<feature type="chain" id="PRO_0000249571" description="Transmembrane protein 171">
    <location>
        <begin position="1"/>
        <end position="322"/>
    </location>
</feature>
<feature type="transmembrane region" description="Helical" evidence="1">
    <location>
        <begin position="22"/>
        <end position="42"/>
    </location>
</feature>
<feature type="transmembrane region" description="Helical" evidence="1">
    <location>
        <begin position="57"/>
        <end position="77"/>
    </location>
</feature>
<feature type="transmembrane region" description="Helical" evidence="1">
    <location>
        <begin position="112"/>
        <end position="132"/>
    </location>
</feature>
<feature type="transmembrane region" description="Helical" evidence="1">
    <location>
        <begin position="159"/>
        <end position="179"/>
    </location>
</feature>
<feature type="region of interest" description="Disordered" evidence="2">
    <location>
        <begin position="223"/>
        <end position="322"/>
    </location>
</feature>
<feature type="compositionally biased region" description="Low complexity" evidence="2">
    <location>
        <begin position="228"/>
        <end position="241"/>
    </location>
</feature>
<feature type="compositionally biased region" description="Polar residues" evidence="2">
    <location>
        <begin position="242"/>
        <end position="267"/>
    </location>
</feature>
<feature type="compositionally biased region" description="Polar residues" evidence="2">
    <location>
        <begin position="279"/>
        <end position="289"/>
    </location>
</feature>
<organism>
    <name type="scientific">Mus musculus</name>
    <name type="common">Mouse</name>
    <dbReference type="NCBI Taxonomy" id="10090"/>
    <lineage>
        <taxon>Eukaryota</taxon>
        <taxon>Metazoa</taxon>
        <taxon>Chordata</taxon>
        <taxon>Craniata</taxon>
        <taxon>Vertebrata</taxon>
        <taxon>Euteleostomi</taxon>
        <taxon>Mammalia</taxon>
        <taxon>Eutheria</taxon>
        <taxon>Euarchontoglires</taxon>
        <taxon>Glires</taxon>
        <taxon>Rodentia</taxon>
        <taxon>Myomorpha</taxon>
        <taxon>Muroidea</taxon>
        <taxon>Muridae</taxon>
        <taxon>Murinae</taxon>
        <taxon>Mus</taxon>
        <taxon>Mus</taxon>
    </lineage>
</organism>
<proteinExistence type="evidence at transcript level"/>
<keyword id="KW-0472">Membrane</keyword>
<keyword id="KW-1185">Reference proteome</keyword>
<keyword id="KW-0812">Transmembrane</keyword>
<keyword id="KW-1133">Transmembrane helix</keyword>
<accession>Q4KL18</accession>
<evidence type="ECO:0000255" key="1"/>
<evidence type="ECO:0000256" key="2">
    <source>
        <dbReference type="SAM" id="MobiDB-lite"/>
    </source>
</evidence>
<evidence type="ECO:0000305" key="3"/>
<gene>
    <name type="primary">Tmem171</name>
    <name type="synonym">Gm905</name>
</gene>
<sequence>MSSVGTAEPDGDQRDRHVSKLIFFLFVFGAALLCVGVLLSIFGYQACQYKPLSHCSIVLKIAGPSCAVVGLGAVILARSRARLHLRERQRQGLQDPDQSFFCGESRQFAQCLIFGFLFLTSGMLISILGIWVPGCDSDWAQEPLNETNTGEGEPQICGFLSLQIMGPLVVLVGLCFFVVAHVKKKNNLSSSRDTSEVEGGHAHSTEPVHITVGDSVIIFPPPPPPYFPESSAAAPSPGANSLHQIENPPSYSSLFNYGTPTPENQGAASEREQELIYTISGQGSSSERSYTGHLPLDLPPRYEEKETAPATPLGAPSDASPP</sequence>
<comment type="subcellular location">
    <subcellularLocation>
        <location evidence="3">Membrane</location>
        <topology evidence="3">Multi-pass membrane protein</topology>
    </subcellularLocation>
</comment>